<feature type="chain" id="PRO_1000120167" description="Large ribosomal subunit protein bL32">
    <location>
        <begin position="1"/>
        <end position="60"/>
    </location>
</feature>
<feature type="region of interest" description="Disordered" evidence="2">
    <location>
        <begin position="1"/>
        <end position="60"/>
    </location>
</feature>
<feature type="compositionally biased region" description="Basic residues" evidence="2">
    <location>
        <begin position="1"/>
        <end position="16"/>
    </location>
</feature>
<feature type="compositionally biased region" description="Basic and acidic residues" evidence="2">
    <location>
        <begin position="17"/>
        <end position="44"/>
    </location>
</feature>
<accession>B3QBD3</accession>
<keyword id="KW-0687">Ribonucleoprotein</keyword>
<keyword id="KW-0689">Ribosomal protein</keyword>
<dbReference type="EMBL" id="CP001096">
    <property type="protein sequence ID" value="ACE99086.1"/>
    <property type="molecule type" value="Genomic_DNA"/>
</dbReference>
<dbReference type="RefSeq" id="WP_011156094.1">
    <property type="nucleotide sequence ID" value="NC_011004.1"/>
</dbReference>
<dbReference type="SMR" id="B3QBD3"/>
<dbReference type="GeneID" id="66891544"/>
<dbReference type="KEGG" id="rpt:Rpal_0527"/>
<dbReference type="HOGENOM" id="CLU_129084_2_2_5"/>
<dbReference type="OrthoDB" id="9801927at2"/>
<dbReference type="Proteomes" id="UP000001725">
    <property type="component" value="Chromosome"/>
</dbReference>
<dbReference type="GO" id="GO:0015934">
    <property type="term" value="C:large ribosomal subunit"/>
    <property type="evidence" value="ECO:0007669"/>
    <property type="project" value="InterPro"/>
</dbReference>
<dbReference type="GO" id="GO:0003735">
    <property type="term" value="F:structural constituent of ribosome"/>
    <property type="evidence" value="ECO:0007669"/>
    <property type="project" value="InterPro"/>
</dbReference>
<dbReference type="GO" id="GO:0006412">
    <property type="term" value="P:translation"/>
    <property type="evidence" value="ECO:0007669"/>
    <property type="project" value="UniProtKB-UniRule"/>
</dbReference>
<dbReference type="Gene3D" id="1.20.5.640">
    <property type="entry name" value="Single helix bin"/>
    <property type="match status" value="1"/>
</dbReference>
<dbReference type="HAMAP" id="MF_00340">
    <property type="entry name" value="Ribosomal_bL32"/>
    <property type="match status" value="1"/>
</dbReference>
<dbReference type="InterPro" id="IPR002677">
    <property type="entry name" value="Ribosomal_bL32"/>
</dbReference>
<dbReference type="InterPro" id="IPR044957">
    <property type="entry name" value="Ribosomal_bL32_bact"/>
</dbReference>
<dbReference type="InterPro" id="IPR011332">
    <property type="entry name" value="Ribosomal_zn-bd"/>
</dbReference>
<dbReference type="NCBIfam" id="TIGR01031">
    <property type="entry name" value="rpmF_bact"/>
    <property type="match status" value="1"/>
</dbReference>
<dbReference type="PANTHER" id="PTHR35534">
    <property type="entry name" value="50S RIBOSOMAL PROTEIN L32"/>
    <property type="match status" value="1"/>
</dbReference>
<dbReference type="PANTHER" id="PTHR35534:SF1">
    <property type="entry name" value="LARGE RIBOSOMAL SUBUNIT PROTEIN BL32"/>
    <property type="match status" value="1"/>
</dbReference>
<dbReference type="Pfam" id="PF01783">
    <property type="entry name" value="Ribosomal_L32p"/>
    <property type="match status" value="1"/>
</dbReference>
<dbReference type="SUPFAM" id="SSF57829">
    <property type="entry name" value="Zn-binding ribosomal proteins"/>
    <property type="match status" value="1"/>
</dbReference>
<reference key="1">
    <citation type="submission" date="2008-05" db="EMBL/GenBank/DDBJ databases">
        <title>Complete sequence of Rhodopseudomonas palustris TIE-1.</title>
        <authorList>
            <consortium name="US DOE Joint Genome Institute"/>
            <person name="Lucas S."/>
            <person name="Copeland A."/>
            <person name="Lapidus A."/>
            <person name="Glavina del Rio T."/>
            <person name="Dalin E."/>
            <person name="Tice H."/>
            <person name="Pitluck S."/>
            <person name="Chain P."/>
            <person name="Malfatti S."/>
            <person name="Shin M."/>
            <person name="Vergez L."/>
            <person name="Lang D."/>
            <person name="Schmutz J."/>
            <person name="Larimer F."/>
            <person name="Land M."/>
            <person name="Hauser L."/>
            <person name="Kyrpides N."/>
            <person name="Mikhailova N."/>
            <person name="Emerson D."/>
            <person name="Newman D.K."/>
            <person name="Roden E."/>
            <person name="Richardson P."/>
        </authorList>
    </citation>
    <scope>NUCLEOTIDE SEQUENCE [LARGE SCALE GENOMIC DNA]</scope>
    <source>
        <strain>TIE-1</strain>
    </source>
</reference>
<evidence type="ECO:0000255" key="1">
    <source>
        <dbReference type="HAMAP-Rule" id="MF_00340"/>
    </source>
</evidence>
<evidence type="ECO:0000256" key="2">
    <source>
        <dbReference type="SAM" id="MobiDB-lite"/>
    </source>
</evidence>
<evidence type="ECO:0000305" key="3"/>
<gene>
    <name evidence="1" type="primary">rpmF</name>
    <name type="ordered locus">Rpal_0527</name>
</gene>
<proteinExistence type="inferred from homology"/>
<comment type="similarity">
    <text evidence="1">Belongs to the bacterial ribosomal protein bL32 family.</text>
</comment>
<sequence>MAVPRRKTSPSRRGMRRSADAIKRPTYVEDKDSGELRRPHHLDLKTGMYKGRQVLKKKDS</sequence>
<protein>
    <recommendedName>
        <fullName evidence="1">Large ribosomal subunit protein bL32</fullName>
    </recommendedName>
    <alternativeName>
        <fullName evidence="3">50S ribosomal protein L32</fullName>
    </alternativeName>
</protein>
<name>RL32_RHOPT</name>
<organism>
    <name type="scientific">Rhodopseudomonas palustris (strain TIE-1)</name>
    <dbReference type="NCBI Taxonomy" id="395960"/>
    <lineage>
        <taxon>Bacteria</taxon>
        <taxon>Pseudomonadati</taxon>
        <taxon>Pseudomonadota</taxon>
        <taxon>Alphaproteobacteria</taxon>
        <taxon>Hyphomicrobiales</taxon>
        <taxon>Nitrobacteraceae</taxon>
        <taxon>Rhodopseudomonas</taxon>
    </lineage>
</organism>